<name>RL32_BRASB</name>
<organism>
    <name type="scientific">Bradyrhizobium sp. (strain BTAi1 / ATCC BAA-1182)</name>
    <dbReference type="NCBI Taxonomy" id="288000"/>
    <lineage>
        <taxon>Bacteria</taxon>
        <taxon>Pseudomonadati</taxon>
        <taxon>Pseudomonadota</taxon>
        <taxon>Alphaproteobacteria</taxon>
        <taxon>Hyphomicrobiales</taxon>
        <taxon>Nitrobacteraceae</taxon>
        <taxon>Bradyrhizobium</taxon>
    </lineage>
</organism>
<evidence type="ECO:0000255" key="1">
    <source>
        <dbReference type="HAMAP-Rule" id="MF_00340"/>
    </source>
</evidence>
<evidence type="ECO:0000256" key="2">
    <source>
        <dbReference type="SAM" id="MobiDB-lite"/>
    </source>
</evidence>
<evidence type="ECO:0000305" key="3"/>
<sequence>MAVPRRKTSPSRRGMRRSADAIKKPTYVEDKDSGELRRPHHLDLKTGMYKGRQVLKKKDA</sequence>
<proteinExistence type="inferred from homology"/>
<accession>A5ETH1</accession>
<feature type="chain" id="PRO_0000296431" description="Large ribosomal subunit protein bL32">
    <location>
        <begin position="1"/>
        <end position="60"/>
    </location>
</feature>
<feature type="region of interest" description="Disordered" evidence="2">
    <location>
        <begin position="1"/>
        <end position="60"/>
    </location>
</feature>
<feature type="compositionally biased region" description="Basic residues" evidence="2">
    <location>
        <begin position="1"/>
        <end position="16"/>
    </location>
</feature>
<feature type="compositionally biased region" description="Basic and acidic residues" evidence="2">
    <location>
        <begin position="17"/>
        <end position="44"/>
    </location>
</feature>
<keyword id="KW-1185">Reference proteome</keyword>
<keyword id="KW-0687">Ribonucleoprotein</keyword>
<keyword id="KW-0689">Ribosomal protein</keyword>
<protein>
    <recommendedName>
        <fullName evidence="1">Large ribosomal subunit protein bL32</fullName>
    </recommendedName>
    <alternativeName>
        <fullName evidence="3">50S ribosomal protein L32</fullName>
    </alternativeName>
</protein>
<gene>
    <name evidence="1" type="primary">rpmF</name>
    <name type="ordered locus">BBta_7619</name>
</gene>
<comment type="similarity">
    <text evidence="1">Belongs to the bacterial ribosomal protein bL32 family.</text>
</comment>
<comment type="sequence caution" evidence="3">
    <conflict type="erroneous initiation">
        <sequence resource="EMBL-CDS" id="ABQ39465"/>
    </conflict>
</comment>
<dbReference type="EMBL" id="CP000494">
    <property type="protein sequence ID" value="ABQ39465.1"/>
    <property type="status" value="ALT_INIT"/>
    <property type="molecule type" value="Genomic_DNA"/>
</dbReference>
<dbReference type="RefSeq" id="WP_006610266.1">
    <property type="nucleotide sequence ID" value="NC_009485.1"/>
</dbReference>
<dbReference type="SMR" id="A5ETH1"/>
<dbReference type="STRING" id="288000.BBta_7619"/>
<dbReference type="KEGG" id="bbt:BBta_7619"/>
<dbReference type="eggNOG" id="COG0333">
    <property type="taxonomic scope" value="Bacteria"/>
</dbReference>
<dbReference type="HOGENOM" id="CLU_129084_2_2_5"/>
<dbReference type="OrthoDB" id="9801927at2"/>
<dbReference type="Proteomes" id="UP000000246">
    <property type="component" value="Chromosome"/>
</dbReference>
<dbReference type="GO" id="GO:0015934">
    <property type="term" value="C:large ribosomal subunit"/>
    <property type="evidence" value="ECO:0007669"/>
    <property type="project" value="InterPro"/>
</dbReference>
<dbReference type="GO" id="GO:0003735">
    <property type="term" value="F:structural constituent of ribosome"/>
    <property type="evidence" value="ECO:0007669"/>
    <property type="project" value="InterPro"/>
</dbReference>
<dbReference type="GO" id="GO:0006412">
    <property type="term" value="P:translation"/>
    <property type="evidence" value="ECO:0007669"/>
    <property type="project" value="UniProtKB-UniRule"/>
</dbReference>
<dbReference type="Gene3D" id="1.20.5.640">
    <property type="entry name" value="Single helix bin"/>
    <property type="match status" value="1"/>
</dbReference>
<dbReference type="HAMAP" id="MF_00340">
    <property type="entry name" value="Ribosomal_bL32"/>
    <property type="match status" value="1"/>
</dbReference>
<dbReference type="InterPro" id="IPR002677">
    <property type="entry name" value="Ribosomal_bL32"/>
</dbReference>
<dbReference type="InterPro" id="IPR044957">
    <property type="entry name" value="Ribosomal_bL32_bact"/>
</dbReference>
<dbReference type="InterPro" id="IPR011332">
    <property type="entry name" value="Ribosomal_zn-bd"/>
</dbReference>
<dbReference type="NCBIfam" id="TIGR01031">
    <property type="entry name" value="rpmF_bact"/>
    <property type="match status" value="1"/>
</dbReference>
<dbReference type="PANTHER" id="PTHR35534">
    <property type="entry name" value="50S RIBOSOMAL PROTEIN L32"/>
    <property type="match status" value="1"/>
</dbReference>
<dbReference type="PANTHER" id="PTHR35534:SF1">
    <property type="entry name" value="LARGE RIBOSOMAL SUBUNIT PROTEIN BL32"/>
    <property type="match status" value="1"/>
</dbReference>
<dbReference type="Pfam" id="PF01783">
    <property type="entry name" value="Ribosomal_L32p"/>
    <property type="match status" value="1"/>
</dbReference>
<dbReference type="SUPFAM" id="SSF57829">
    <property type="entry name" value="Zn-binding ribosomal proteins"/>
    <property type="match status" value="1"/>
</dbReference>
<reference key="1">
    <citation type="journal article" date="2007" name="Science">
        <title>Legumes symbioses: absence of nod genes in photosynthetic bradyrhizobia.</title>
        <authorList>
            <person name="Giraud E."/>
            <person name="Moulin L."/>
            <person name="Vallenet D."/>
            <person name="Barbe V."/>
            <person name="Cytryn E."/>
            <person name="Avarre J.-C."/>
            <person name="Jaubert M."/>
            <person name="Simon D."/>
            <person name="Cartieaux F."/>
            <person name="Prin Y."/>
            <person name="Bena G."/>
            <person name="Hannibal L."/>
            <person name="Fardoux J."/>
            <person name="Kojadinovic M."/>
            <person name="Vuillet L."/>
            <person name="Lajus A."/>
            <person name="Cruveiller S."/>
            <person name="Rouy Z."/>
            <person name="Mangenot S."/>
            <person name="Segurens B."/>
            <person name="Dossat C."/>
            <person name="Franck W.L."/>
            <person name="Chang W.-S."/>
            <person name="Saunders E."/>
            <person name="Bruce D."/>
            <person name="Richardson P."/>
            <person name="Normand P."/>
            <person name="Dreyfus B."/>
            <person name="Pignol D."/>
            <person name="Stacey G."/>
            <person name="Emerich D."/>
            <person name="Vermeglio A."/>
            <person name="Medigue C."/>
            <person name="Sadowsky M."/>
        </authorList>
    </citation>
    <scope>NUCLEOTIDE SEQUENCE [LARGE SCALE GENOMIC DNA]</scope>
    <source>
        <strain>BTAi1 / ATCC BAA-1182</strain>
    </source>
</reference>